<organism>
    <name type="scientific">Trachypithecus phayrei</name>
    <name type="common">Phayre's leaf monkey</name>
    <dbReference type="NCBI Taxonomy" id="61618"/>
    <lineage>
        <taxon>Eukaryota</taxon>
        <taxon>Metazoa</taxon>
        <taxon>Chordata</taxon>
        <taxon>Craniata</taxon>
        <taxon>Vertebrata</taxon>
        <taxon>Euteleostomi</taxon>
        <taxon>Mammalia</taxon>
        <taxon>Eutheria</taxon>
        <taxon>Euarchontoglires</taxon>
        <taxon>Primates</taxon>
        <taxon>Haplorrhini</taxon>
        <taxon>Catarrhini</taxon>
        <taxon>Cercopithecidae</taxon>
        <taxon>Colobinae</taxon>
        <taxon>Trachypithecus</taxon>
    </lineage>
</organism>
<accession>O97879</accession>
<gene>
    <name type="primary">CCR5</name>
    <name type="synonym">CMKBR5</name>
</gene>
<dbReference type="EMBL" id="AF075443">
    <property type="protein sequence ID" value="AAD19855.1"/>
    <property type="molecule type" value="Genomic_DNA"/>
</dbReference>
<dbReference type="SMR" id="O97879"/>
<dbReference type="GlyCosmos" id="O97879">
    <property type="glycosylation" value="2 sites, No reported glycans"/>
</dbReference>
<dbReference type="GO" id="GO:0005737">
    <property type="term" value="C:cytoplasm"/>
    <property type="evidence" value="ECO:0007669"/>
    <property type="project" value="TreeGrafter"/>
</dbReference>
<dbReference type="GO" id="GO:0009897">
    <property type="term" value="C:external side of plasma membrane"/>
    <property type="evidence" value="ECO:0000250"/>
    <property type="project" value="UniProtKB"/>
</dbReference>
<dbReference type="GO" id="GO:0016493">
    <property type="term" value="F:C-C chemokine receptor activity"/>
    <property type="evidence" value="ECO:0000250"/>
    <property type="project" value="UniProtKB"/>
</dbReference>
<dbReference type="GO" id="GO:0071791">
    <property type="term" value="F:chemokine (C-C motif) ligand 5 binding"/>
    <property type="evidence" value="ECO:0007669"/>
    <property type="project" value="TreeGrafter"/>
</dbReference>
<dbReference type="GO" id="GO:0019722">
    <property type="term" value="P:calcium-mediated signaling"/>
    <property type="evidence" value="ECO:0007669"/>
    <property type="project" value="TreeGrafter"/>
</dbReference>
<dbReference type="GO" id="GO:0060326">
    <property type="term" value="P:cell chemotaxis"/>
    <property type="evidence" value="ECO:0007669"/>
    <property type="project" value="TreeGrafter"/>
</dbReference>
<dbReference type="GO" id="GO:0006955">
    <property type="term" value="P:immune response"/>
    <property type="evidence" value="ECO:0007669"/>
    <property type="project" value="InterPro"/>
</dbReference>
<dbReference type="GO" id="GO:0006954">
    <property type="term" value="P:inflammatory response"/>
    <property type="evidence" value="ECO:0007669"/>
    <property type="project" value="InterPro"/>
</dbReference>
<dbReference type="GO" id="GO:0007204">
    <property type="term" value="P:positive regulation of cytosolic calcium ion concentration"/>
    <property type="evidence" value="ECO:0007669"/>
    <property type="project" value="TreeGrafter"/>
</dbReference>
<dbReference type="CDD" id="cd15184">
    <property type="entry name" value="7tmA_CCR5_CCR2"/>
    <property type="match status" value="1"/>
</dbReference>
<dbReference type="FunFam" id="1.20.1070.10:FF:000026">
    <property type="entry name" value="C-C chemokine receptor type 5"/>
    <property type="match status" value="1"/>
</dbReference>
<dbReference type="Gene3D" id="1.20.1070.10">
    <property type="entry name" value="Rhodopsin 7-helix transmembrane proteins"/>
    <property type="match status" value="1"/>
</dbReference>
<dbReference type="InterPro" id="IPR050119">
    <property type="entry name" value="CCR1-9-like"/>
</dbReference>
<dbReference type="InterPro" id="IPR002240">
    <property type="entry name" value="Chemokine_CCR5"/>
</dbReference>
<dbReference type="InterPro" id="IPR000355">
    <property type="entry name" value="Chemokine_rcpt"/>
</dbReference>
<dbReference type="InterPro" id="IPR000276">
    <property type="entry name" value="GPCR_Rhodpsn"/>
</dbReference>
<dbReference type="InterPro" id="IPR017452">
    <property type="entry name" value="GPCR_Rhodpsn_7TM"/>
</dbReference>
<dbReference type="PANTHER" id="PTHR10489:SF686">
    <property type="entry name" value="C-C CHEMOKINE RECEPTOR TYPE 5"/>
    <property type="match status" value="1"/>
</dbReference>
<dbReference type="PANTHER" id="PTHR10489">
    <property type="entry name" value="CELL ADHESION MOLECULE"/>
    <property type="match status" value="1"/>
</dbReference>
<dbReference type="Pfam" id="PF00001">
    <property type="entry name" value="7tm_1"/>
    <property type="match status" value="1"/>
</dbReference>
<dbReference type="PRINTS" id="PR00657">
    <property type="entry name" value="CCCHEMOKINER"/>
</dbReference>
<dbReference type="PRINTS" id="PR01110">
    <property type="entry name" value="CHEMOKINER5"/>
</dbReference>
<dbReference type="PRINTS" id="PR00237">
    <property type="entry name" value="GPCRRHODOPSN"/>
</dbReference>
<dbReference type="SUPFAM" id="SSF81321">
    <property type="entry name" value="Family A G protein-coupled receptor-like"/>
    <property type="match status" value="1"/>
</dbReference>
<dbReference type="PROSITE" id="PS00237">
    <property type="entry name" value="G_PROTEIN_RECEP_F1_1"/>
    <property type="match status" value="1"/>
</dbReference>
<dbReference type="PROSITE" id="PS50262">
    <property type="entry name" value="G_PROTEIN_RECEP_F1_2"/>
    <property type="match status" value="1"/>
</dbReference>
<evidence type="ECO:0000250" key="1">
    <source>
        <dbReference type="UniProtKB" id="P51681"/>
    </source>
</evidence>
<evidence type="ECO:0000250" key="2">
    <source>
        <dbReference type="UniProtKB" id="Q9XT76"/>
    </source>
</evidence>
<evidence type="ECO:0000255" key="3"/>
<evidence type="ECO:0000255" key="4">
    <source>
        <dbReference type="PROSITE-ProRule" id="PRU00521"/>
    </source>
</evidence>
<comment type="function">
    <text evidence="1">Receptor for a number of inflammatory CC-chemokines including CCL3/MIP-1-alpha, CCL4/MIP-1-beta and RANTES and subsequently transduces a signal by increasing the intracellular calcium ion level. May play a role in the control of granulocytic lineage proliferation or differentiation. Participates in T-lymphocyte migration to the infection site by acting as a chemotactic receptor.</text>
</comment>
<comment type="subunit">
    <text evidence="1">Interacts with PRAF2. Efficient ligand binding to CCL3/MIP-1alpha and CCL4/MIP-1beta requires sulfation, O-glycosylation and sialic acid modifications. Glycosylation on Ser-6 is required for efficient binding of CCL4. Interacts with GRK2. Interacts with ARRB1 and ARRB2. Interacts with CNIH4. Interacts with S100A4; this interaction stimulates T-lymphocyte chemotaxis.</text>
</comment>
<comment type="subcellular location">
    <subcellularLocation>
        <location evidence="2">Cell membrane</location>
        <topology evidence="2">Multi-pass membrane protein</topology>
    </subcellularLocation>
</comment>
<comment type="PTM">
    <text evidence="1">Sulfated on at least 2 of the N-terminal tyrosines. Sulfation is required for efficient binding of the chemokines, CCL3 and CCL4 (By similarity).</text>
</comment>
<comment type="PTM">
    <text evidence="1">Palmitoylation in the C-terminal is important for cell surface expression.</text>
</comment>
<comment type="PTM">
    <text evidence="1">Phosphorylation on serine residues in the C-terminal is stimulated by binding CC chemokines especially by APO-RANTES.</text>
</comment>
<comment type="PTM">
    <text evidence="1">O-glycosylated, but not N-glycosylated. Ser-6 appears to be the major site even if Ser-7 may be also O-glycosylated. Also sialylated glycans present which contribute to chemokine binding. Thr-16 and Ser-17 may also be glycosylated and, if so, with small moieties such as a T-antigen.</text>
</comment>
<comment type="similarity">
    <text evidence="4">Belongs to the G-protein coupled receptor 1 family.</text>
</comment>
<reference key="1">
    <citation type="journal article" date="1999" name="Mol. Biol. Evol.">
        <title>Sequence evolution of the CCR5 chemokine receptor gene in primates.</title>
        <authorList>
            <person name="Zhang Y.-W."/>
            <person name="Ryder O.A."/>
            <person name="Zhang Y.-P."/>
        </authorList>
    </citation>
    <scope>NUCLEOTIDE SEQUENCE [GENOMIC DNA]</scope>
</reference>
<proteinExistence type="inferred from homology"/>
<feature type="chain" id="PRO_0000069285" description="C-C chemokine receptor type 5">
    <location>
        <begin position="1"/>
        <end position="352"/>
    </location>
</feature>
<feature type="topological domain" description="Extracellular" evidence="3">
    <location>
        <begin position="1"/>
        <end position="30"/>
    </location>
</feature>
<feature type="transmembrane region" description="Helical; Name=1" evidence="3">
    <location>
        <begin position="31"/>
        <end position="58"/>
    </location>
</feature>
<feature type="topological domain" description="Cytoplasmic" evidence="3">
    <location>
        <begin position="59"/>
        <end position="68"/>
    </location>
</feature>
<feature type="transmembrane region" description="Helical; Name=2" evidence="3">
    <location>
        <begin position="69"/>
        <end position="89"/>
    </location>
</feature>
<feature type="topological domain" description="Extracellular" evidence="3">
    <location>
        <begin position="90"/>
        <end position="102"/>
    </location>
</feature>
<feature type="transmembrane region" description="Helical; Name=3" evidence="3">
    <location>
        <begin position="103"/>
        <end position="124"/>
    </location>
</feature>
<feature type="topological domain" description="Cytoplasmic" evidence="3">
    <location>
        <begin position="125"/>
        <end position="141"/>
    </location>
</feature>
<feature type="transmembrane region" description="Helical; Name=4" evidence="3">
    <location>
        <begin position="142"/>
        <end position="166"/>
    </location>
</feature>
<feature type="topological domain" description="Extracellular" evidence="3">
    <location>
        <begin position="167"/>
        <end position="198"/>
    </location>
</feature>
<feature type="transmembrane region" description="Helical; Name=5" evidence="3">
    <location>
        <begin position="199"/>
        <end position="218"/>
    </location>
</feature>
<feature type="topological domain" description="Cytoplasmic" evidence="3">
    <location>
        <begin position="219"/>
        <end position="235"/>
    </location>
</feature>
<feature type="transmembrane region" description="Helical; Name=6" evidence="3">
    <location>
        <begin position="236"/>
        <end position="260"/>
    </location>
</feature>
<feature type="topological domain" description="Extracellular" evidence="3">
    <location>
        <begin position="261"/>
        <end position="277"/>
    </location>
</feature>
<feature type="transmembrane region" description="Helical; Name=7" evidence="3">
    <location>
        <begin position="278"/>
        <end position="301"/>
    </location>
</feature>
<feature type="topological domain" description="Cytoplasmic" evidence="3">
    <location>
        <begin position="302"/>
        <end position="352"/>
    </location>
</feature>
<feature type="modified residue" description="Sulfotyrosine" evidence="1">
    <location>
        <position position="3"/>
    </location>
</feature>
<feature type="modified residue" description="Sulfotyrosine" evidence="3">
    <location>
        <position position="10"/>
    </location>
</feature>
<feature type="modified residue" description="Sulfotyrosine" evidence="3">
    <location>
        <position position="14"/>
    </location>
</feature>
<feature type="modified residue" description="Sulfotyrosine" evidence="3">
    <location>
        <position position="15"/>
    </location>
</feature>
<feature type="modified residue" description="Phosphoserine; by BARK1" evidence="1">
    <location>
        <position position="336"/>
    </location>
</feature>
<feature type="modified residue" description="Phosphoserine; by BARK1" evidence="1">
    <location>
        <position position="337"/>
    </location>
</feature>
<feature type="modified residue" description="Phosphoserine; by BARK1" evidence="1">
    <location>
        <position position="342"/>
    </location>
</feature>
<feature type="modified residue" description="Phosphoserine; by BARK1" evidence="1">
    <location>
        <position position="349"/>
    </location>
</feature>
<feature type="lipid moiety-binding region" description="S-palmitoyl cysteine" evidence="1">
    <location>
        <position position="321"/>
    </location>
</feature>
<feature type="lipid moiety-binding region" description="S-palmitoyl cysteine" evidence="1">
    <location>
        <position position="323"/>
    </location>
</feature>
<feature type="lipid moiety-binding region" description="S-palmitoyl cysteine" evidence="1">
    <location>
        <position position="324"/>
    </location>
</feature>
<feature type="glycosylation site" description="O-linked (GalNAc...) serine" evidence="1">
    <location>
        <position position="6"/>
    </location>
</feature>
<feature type="glycosylation site" description="O-linked (GalNAc...) serine" evidence="1">
    <location>
        <position position="7"/>
    </location>
</feature>
<feature type="disulfide bond" evidence="1">
    <location>
        <begin position="20"/>
        <end position="269"/>
    </location>
</feature>
<feature type="disulfide bond" evidence="4">
    <location>
        <begin position="101"/>
        <end position="178"/>
    </location>
</feature>
<sequence>MDYQVSSPTYDIDYYTSEPCQKVNVKQIAARLLPPLYSLVFIFGFVGNILVVLILINCKRLKSMTDIYLLNLAISDLFFLLTVPFWAHYAAAQWDFGNTMCQLLTGLYFIGFFSGIFFIILLTIDRYLAIVHAVFALKARTVTFGVVTSVITWVVAVFASLPGIIFTRSQREGLHYTCSSHFPYSQYQFWKNFQTLKIVILGLVLPLLVMVICYSGILKTLLRCRNEKKRHRAVRLIFTIMIVYFLFWAPYNIVLLLNTFQEFFGLNNCSSSNRLDQAMQVTETLGMTHCCINPIIYAFVGEKFRNYLLVFFQKHIAKRFCKCCSIFQQEAPERASSVYTRSTGEQEISVGL</sequence>
<name>CCR5_TRAPH</name>
<protein>
    <recommendedName>
        <fullName>C-C chemokine receptor type 5</fullName>
        <shortName>C-C CKR-5</shortName>
        <shortName>CC-CKR-5</shortName>
        <shortName>CCR-5</shortName>
        <shortName>CCR5</shortName>
    </recommendedName>
    <cdAntigenName>CD195</cdAntigenName>
</protein>
<keyword id="KW-1003">Cell membrane</keyword>
<keyword id="KW-1015">Disulfide bond</keyword>
<keyword id="KW-0297">G-protein coupled receptor</keyword>
<keyword id="KW-0325">Glycoprotein</keyword>
<keyword id="KW-0449">Lipoprotein</keyword>
<keyword id="KW-0472">Membrane</keyword>
<keyword id="KW-0564">Palmitate</keyword>
<keyword id="KW-0597">Phosphoprotein</keyword>
<keyword id="KW-0675">Receptor</keyword>
<keyword id="KW-0765">Sulfation</keyword>
<keyword id="KW-0807">Transducer</keyword>
<keyword id="KW-0812">Transmembrane</keyword>
<keyword id="KW-1133">Transmembrane helix</keyword>